<organism>
    <name type="scientific">Mus musculus</name>
    <name type="common">Mouse</name>
    <dbReference type="NCBI Taxonomy" id="10090"/>
    <lineage>
        <taxon>Eukaryota</taxon>
        <taxon>Metazoa</taxon>
        <taxon>Chordata</taxon>
        <taxon>Craniata</taxon>
        <taxon>Vertebrata</taxon>
        <taxon>Euteleostomi</taxon>
        <taxon>Mammalia</taxon>
        <taxon>Eutheria</taxon>
        <taxon>Euarchontoglires</taxon>
        <taxon>Glires</taxon>
        <taxon>Rodentia</taxon>
        <taxon>Myomorpha</taxon>
        <taxon>Muroidea</taxon>
        <taxon>Muridae</taxon>
        <taxon>Murinae</taxon>
        <taxon>Mus</taxon>
        <taxon>Mus</taxon>
    </lineage>
</organism>
<protein>
    <recommendedName>
        <fullName>H-2 class II histocompatibility antigen, E-U alpha chain</fullName>
    </recommendedName>
</protein>
<reference key="1">
    <citation type="journal article" date="1995" name="Int. Immunol.">
        <title>Inactivation of E alpha and E beta expression in inbred and wild mice by multiple distinct mutations, some of which predate speciation within Mus species.</title>
        <authorList>
            <person name="Tacchini-Cottier F."/>
            <person name="Mayer W.E."/>
            <person name="Begovich A.B."/>
            <person name="Jones P.P."/>
        </authorList>
    </citation>
    <scope>NUCLEOTIDE SEQUENCE [MRNA]</scope>
    <source>
        <strain>TW2</strain>
        <tissue>Spleen</tissue>
    </source>
</reference>
<reference key="2">
    <citation type="journal article" date="1986" name="J. Immunol.">
        <title>E alpha u and E beta u chain association: where lies the anomaly?</title>
        <authorList>
            <person name="Ayane M."/>
            <person name="Mengle-Gaw L."/>
            <person name="McDevitt H.O."/>
            <person name="Benoist C."/>
            <person name="Mathis D."/>
        </authorList>
    </citation>
    <scope>NUCLEOTIDE SEQUENCE [MRNA] OF 26-255</scope>
    <source>
        <strain>B10.PL</strain>
        <tissue>Spleen</tissue>
    </source>
</reference>
<reference key="3">
    <citation type="journal article" date="1989" name="J. Exp. Med.">
        <title>A unique sequence of the NZW I-E beta chain and its possible contribution to autoimmunity in the (NZB x NZW)F1 mouse.</title>
        <authorList>
            <person name="Schiffenbauer J."/>
            <person name="McCarthy D.M."/>
            <person name="Nygard N.R."/>
            <person name="Woulfe S.L."/>
            <person name="Didier D.K."/>
            <person name="Schwartz B.D."/>
        </authorList>
    </citation>
    <scope>NUCLEOTIDE SEQUENCE [GENOMIC DNA] OF 27-109</scope>
    <source>
        <strain>NZW/LacJ</strain>
    </source>
</reference>
<reference key="4">
    <citation type="journal article" date="1981" name="Immunogenetics">
        <title>Variable synthesis and expression of E alpha and Ae (E beta) Ia polypeptide chains in mice of different H-2 haplotypes.</title>
        <authorList>
            <person name="Jones P.P."/>
            <person name="Murphy D.B."/>
            <person name="McDevitt H.O."/>
        </authorList>
    </citation>
    <scope>ANALYSIS OF THE HAPLOTYPE-SPECIFIC VARIABLE EXPRESSION</scope>
</reference>
<reference key="5">
    <citation type="journal article" date="1983" name="Proc. Natl. Acad. Sci. U.S.A.">
        <title>Several mechanisms can account for defective E alpha gene expression in different mouse haplotypes.</title>
        <authorList>
            <person name="Mathis D.J."/>
            <person name="Benoist C."/>
            <person name="Williams V.E. II"/>
            <person name="Kanter M."/>
            <person name="McDevitt H.O."/>
        </authorList>
    </citation>
    <scope>TRANSCRIPT ANALYSIS</scope>
    <scope>POLYMORPHISM</scope>
</reference>
<reference key="6">
    <citation type="journal article" date="1989" name="J. Immunol.">
        <title>Molecular defects in the non-expressed H-2 E alpha genes of the f and q haplotypes.</title>
        <authorList>
            <person name="Vu T.H."/>
            <person name="Begovich A.B."/>
            <person name="Tacchini-Cottier F.M."/>
            <person name="Jones P.P."/>
        </authorList>
    </citation>
    <scope>POLYMORPHISM</scope>
</reference>
<evidence type="ECO:0000255" key="1"/>
<evidence type="ECO:0000255" key="2">
    <source>
        <dbReference type="PROSITE-ProRule" id="PRU00114"/>
    </source>
</evidence>
<evidence type="ECO:0000305" key="3"/>
<feature type="signal peptide" evidence="1">
    <location>
        <begin position="1"/>
        <end position="25"/>
    </location>
</feature>
<feature type="chain" id="PRO_0000080750" description="H-2 class II histocompatibility antigen, E-U alpha chain">
    <location>
        <begin position="26"/>
        <end position="255"/>
    </location>
</feature>
<feature type="topological domain" description="Extracellular" evidence="1">
    <location>
        <begin position="26"/>
        <end position="217"/>
    </location>
</feature>
<feature type="transmembrane region" description="Helical" evidence="1">
    <location>
        <begin position="218"/>
        <end position="238"/>
    </location>
</feature>
<feature type="topological domain" description="Cytoplasmic" evidence="1">
    <location>
        <begin position="239"/>
        <end position="255"/>
    </location>
</feature>
<feature type="domain" description="Ig-like C1-type">
    <location>
        <begin position="112"/>
        <end position="204"/>
    </location>
</feature>
<feature type="region of interest" description="Alpha-1">
    <location>
        <begin position="26"/>
        <end position="109"/>
    </location>
</feature>
<feature type="region of interest" description="Alpha-2">
    <location>
        <begin position="110"/>
        <end position="203"/>
    </location>
</feature>
<feature type="region of interest" description="Connecting peptide">
    <location>
        <begin position="204"/>
        <end position="216"/>
    </location>
</feature>
<feature type="glycosylation site" description="N-linked (GlcNAc...) asparagine" evidence="1">
    <location>
        <position position="143"/>
    </location>
</feature>
<feature type="disulfide bond" evidence="2">
    <location>
        <begin position="132"/>
        <end position="188"/>
    </location>
</feature>
<feature type="sequence conflict" description="In Ref. 1; AAC52482." evidence="3" ref="1">
    <original>Y</original>
    <variation>F</variation>
    <location>
        <position position="47"/>
    </location>
</feature>
<feature type="sequence conflict" description="In Ref. 1; AAC52482." evidence="3" ref="1">
    <original>K</original>
    <variation>E</variation>
    <location>
        <position position="100"/>
    </location>
</feature>
<feature type="sequence conflict" description="In Ref. 1; AAC52482." evidence="3" ref="1">
    <original>V</original>
    <variation>I</variation>
    <location>
        <position position="131"/>
    </location>
</feature>
<feature type="sequence conflict" description="In Ref. 1; AAC52482." evidence="3" ref="1">
    <original>L</original>
    <variation>F</variation>
    <location>
        <position position="147"/>
    </location>
</feature>
<feature type="sequence conflict" description="In Ref. 1; AAC52482." evidence="3" ref="1">
    <original>Q</original>
    <variation>R</variation>
    <location>
        <position position="151"/>
    </location>
</feature>
<feature type="sequence conflict" description="In Ref. 1; AAC52482." evidence="3" ref="1">
    <original>K</original>
    <variation>T</variation>
    <location>
        <position position="215"/>
    </location>
</feature>
<keyword id="KW-1064">Adaptive immunity</keyword>
<keyword id="KW-1015">Disulfide bond</keyword>
<keyword id="KW-0325">Glycoprotein</keyword>
<keyword id="KW-0391">Immunity</keyword>
<keyword id="KW-0393">Immunoglobulin domain</keyword>
<keyword id="KW-0472">Membrane</keyword>
<keyword id="KW-0491">MHC II</keyword>
<keyword id="KW-1185">Reference proteome</keyword>
<keyword id="KW-0732">Signal</keyword>
<keyword id="KW-0812">Transmembrane</keyword>
<keyword id="KW-1133">Transmembrane helix</keyword>
<proteinExistence type="evidence at transcript level"/>
<comment type="subcellular location">
    <subcellularLocation>
        <location evidence="3">Membrane</location>
        <topology evidence="3">Single-pass type I membrane protein</topology>
    </subcellularLocation>
</comment>
<comment type="polymorphism">
    <text>In H2b and H2s haplotype strains (e.g. C57BL/6, C57BL/10, C57L/J, LP/J, 129 and SJL/J mice), there is a deletion of 627 bp in the promoter and the first exon, leading to a failure to express the gene. In the haplotype H2q gene, an insertion in the second exon results in a frameshift and a premature stop codon, and in the haplotype H2f gene, a base substitution creates a stop codon in the first exon, leading to defective protein translation in the strains of these haplotypes.</text>
</comment>
<comment type="similarity">
    <text evidence="3">Belongs to the MHC class II family.</text>
</comment>
<comment type="caution">
    <text evidence="3">Defined as a polymorphic pseudogene by MGI.</text>
</comment>
<accession>P14439</accession>
<accession>Q31092</accession>
<sequence length="255" mass="29108">MATIGALLLRFFFIAVLMSSQKSWAIKEEHTIIQAEFYLLPDKRGEYMFDFDGDEIFHVDIEKSETIWRLEEFAKFASFEAQGALANIAVDKANLDVMKKRSNNTPDANVAPEVTVLSRSPVNLGEPNILVCFIDKFSPPVVNVTWLRNGQPVTEGVSETVFLPRDDHLFRKFHYLTFLPSTDDFYDCEVDHWGLEEPLRKHWEFEEKTLLPETKENVVCALGLFVGLVGIVVGIILIMKGIKKRNVVERRQGAL</sequence>
<name>HA23_MOUSE</name>
<gene>
    <name type="primary">H2-Ea</name>
    <name type="synonym">H2-Ea-ps</name>
</gene>
<dbReference type="EMBL" id="U13648">
    <property type="protein sequence ID" value="AAC52482.1"/>
    <property type="molecule type" value="mRNA"/>
</dbReference>
<dbReference type="EMBL" id="M12818">
    <property type="protein sequence ID" value="AAA39638.1"/>
    <property type="molecule type" value="mRNA"/>
</dbReference>
<dbReference type="PIR" id="I55971">
    <property type="entry name" value="I55971"/>
</dbReference>
<dbReference type="PIR" id="PL0127">
    <property type="entry name" value="PL0127"/>
</dbReference>
<dbReference type="RefSeq" id="NP_034511.2">
    <property type="nucleotide sequence ID" value="NM_010381.2"/>
</dbReference>
<dbReference type="SMR" id="P14439"/>
<dbReference type="GlyCosmos" id="P14439">
    <property type="glycosylation" value="1 site, No reported glycans"/>
</dbReference>
<dbReference type="GeneID" id="100504404"/>
<dbReference type="KEGG" id="mmu:100504404"/>
<dbReference type="AGR" id="MGI:95900"/>
<dbReference type="CTD" id="100504404"/>
<dbReference type="MGI" id="MGI:95900">
    <property type="gene designation" value="H2-Ea"/>
</dbReference>
<dbReference type="BioGRID-ORCS" id="100504404">
    <property type="hits" value="2 hits in 17 CRISPR screens"/>
</dbReference>
<dbReference type="ChiTaRS" id="H2-Ea-ps">
    <property type="organism name" value="mouse"/>
</dbReference>
<dbReference type="Proteomes" id="UP000000589">
    <property type="component" value="Unplaced"/>
</dbReference>
<dbReference type="GO" id="GO:0009897">
    <property type="term" value="C:external side of plasma membrane"/>
    <property type="evidence" value="ECO:0000314"/>
    <property type="project" value="MGI"/>
</dbReference>
<dbReference type="GO" id="GO:0005764">
    <property type="term" value="C:lysosome"/>
    <property type="evidence" value="ECO:0000266"/>
    <property type="project" value="MGI"/>
</dbReference>
<dbReference type="GO" id="GO:0042613">
    <property type="term" value="C:MHC class II protein complex"/>
    <property type="evidence" value="ECO:0007669"/>
    <property type="project" value="UniProtKB-KW"/>
</dbReference>
<dbReference type="GO" id="GO:0005886">
    <property type="term" value="C:plasma membrane"/>
    <property type="evidence" value="ECO:0000266"/>
    <property type="project" value="MGI"/>
</dbReference>
<dbReference type="GO" id="GO:0019886">
    <property type="term" value="P:antigen processing and presentation of exogenous peptide antigen via MHC class II"/>
    <property type="evidence" value="ECO:0000314"/>
    <property type="project" value="MGI"/>
</dbReference>
<dbReference type="GO" id="GO:0016064">
    <property type="term" value="P:immunoglobulin mediated immune response"/>
    <property type="evidence" value="ECO:0000314"/>
    <property type="project" value="MGI"/>
</dbReference>
<dbReference type="GO" id="GO:0050778">
    <property type="term" value="P:positive regulation of immune response"/>
    <property type="evidence" value="ECO:0000314"/>
    <property type="project" value="MGI"/>
</dbReference>
<dbReference type="CDD" id="cd21005">
    <property type="entry name" value="IgC1_MHC_II_alpha_I-EK"/>
    <property type="match status" value="1"/>
</dbReference>
<dbReference type="FunFam" id="2.60.40.10:FF:000280">
    <property type="entry name" value="HLA class II histocompatibility antigen, DR alpha chain"/>
    <property type="match status" value="1"/>
</dbReference>
<dbReference type="FunFam" id="3.10.320.10:FF:000002">
    <property type="entry name" value="HLA class II histocompatibility antigen, DR alpha chain"/>
    <property type="match status" value="1"/>
</dbReference>
<dbReference type="Gene3D" id="3.10.320.10">
    <property type="entry name" value="Class II Histocompatibility Antigen, M Beta Chain, Chain B, domain 1"/>
    <property type="match status" value="1"/>
</dbReference>
<dbReference type="Gene3D" id="2.60.40.10">
    <property type="entry name" value="Immunoglobulins"/>
    <property type="match status" value="1"/>
</dbReference>
<dbReference type="InterPro" id="IPR007110">
    <property type="entry name" value="Ig-like_dom"/>
</dbReference>
<dbReference type="InterPro" id="IPR036179">
    <property type="entry name" value="Ig-like_dom_sf"/>
</dbReference>
<dbReference type="InterPro" id="IPR013783">
    <property type="entry name" value="Ig-like_fold"/>
</dbReference>
<dbReference type="InterPro" id="IPR003006">
    <property type="entry name" value="Ig/MHC_CS"/>
</dbReference>
<dbReference type="InterPro" id="IPR003597">
    <property type="entry name" value="Ig_C1-set"/>
</dbReference>
<dbReference type="InterPro" id="IPR050160">
    <property type="entry name" value="MHC/Immunoglobulin"/>
</dbReference>
<dbReference type="InterPro" id="IPR011162">
    <property type="entry name" value="MHC_I/II-like_Ag-recog"/>
</dbReference>
<dbReference type="InterPro" id="IPR014745">
    <property type="entry name" value="MHC_II_a/b_N"/>
</dbReference>
<dbReference type="InterPro" id="IPR001003">
    <property type="entry name" value="MHC_II_a_N"/>
</dbReference>
<dbReference type="PANTHER" id="PTHR19944:SF86">
    <property type="entry name" value="HLA CLASS II HISTOCOMPATIBILITY ANTIGEN, DR ALPHA CHAIN"/>
    <property type="match status" value="1"/>
</dbReference>
<dbReference type="PANTHER" id="PTHR19944">
    <property type="entry name" value="MHC CLASS II-RELATED"/>
    <property type="match status" value="1"/>
</dbReference>
<dbReference type="Pfam" id="PF07654">
    <property type="entry name" value="C1-set"/>
    <property type="match status" value="1"/>
</dbReference>
<dbReference type="Pfam" id="PF00993">
    <property type="entry name" value="MHC_II_alpha"/>
    <property type="match status" value="1"/>
</dbReference>
<dbReference type="SMART" id="SM00407">
    <property type="entry name" value="IGc1"/>
    <property type="match status" value="1"/>
</dbReference>
<dbReference type="SMART" id="SM00920">
    <property type="entry name" value="MHC_II_alpha"/>
    <property type="match status" value="1"/>
</dbReference>
<dbReference type="SUPFAM" id="SSF48726">
    <property type="entry name" value="Immunoglobulin"/>
    <property type="match status" value="1"/>
</dbReference>
<dbReference type="SUPFAM" id="SSF54452">
    <property type="entry name" value="MHC antigen-recognition domain"/>
    <property type="match status" value="1"/>
</dbReference>
<dbReference type="PROSITE" id="PS50835">
    <property type="entry name" value="IG_LIKE"/>
    <property type="match status" value="1"/>
</dbReference>
<dbReference type="PROSITE" id="PS00290">
    <property type="entry name" value="IG_MHC"/>
    <property type="match status" value="1"/>
</dbReference>